<comment type="function">
    <text evidence="1">May function in ocular mucus homeostasis.</text>
</comment>
<comment type="subcellular location">
    <subcellularLocation>
        <location evidence="10">Secreted</location>
    </subcellularLocation>
</comment>
<comment type="alternative products">
    <event type="alternative splicing"/>
    <isoform>
        <id>Q6PZE0-1</id>
        <name>1</name>
        <name>Mucin-19</name>
        <sequence type="displayed"/>
    </isoform>
    <isoform>
        <id>Q6JHY2-1</id>
        <name>2</name>
        <name>Smgc</name>
        <sequence type="external"/>
    </isoform>
    <isoform>
        <id>Q6JHY2-2</id>
        <name>3</name>
        <sequence type="external"/>
    </isoform>
    <isoform>
        <id>Q6JHY2-3</id>
        <name>4</name>
        <sequence type="external"/>
    </isoform>
    <isoform>
        <id>Q6JHY2-4</id>
        <name>5</name>
        <name>t-Smgc</name>
        <sequence type="external"/>
    </isoform>
    <isoform>
        <id>Q6JHY2-5</id>
        <name>6</name>
        <sequence type="external"/>
    </isoform>
    <text>Isoform 1 and isoform 2-6 share the first 17 amino acid residues that correspond to the signal sequence.</text>
</comment>
<comment type="tissue specificity">
    <text evidence="7 8 9">Specifically expressed in sublingual salivary glands. Expressed by mucous cells of the submandibular gland and submucosal gland of the trachea. Expression is altered in sld (sublingual gland differentiation arrest) mutants.</text>
</comment>
<comment type="sequence caution" evidence="10">
    <conflict type="miscellaneous discrepancy">
        <sequence resource="EMBL-CDS" id="AAO49800"/>
    </conflict>
    <text>Contaminating sequence. Sequence of unknown origin in the N-terminal part.</text>
</comment>
<comment type="online information" name="Mucin database">
    <link uri="http://www.medkem.gu.se/mucinbiology/databases/"/>
</comment>
<name>MUC19_MOUSE</name>
<accession>Q6PZE0</accession>
<accession>A7UN62</accession>
<accession>A7UN63</accession>
<accession>A7UN64</accession>
<accession>A7UN66</accession>
<accession>Q6P7U5</accession>
<accession>Q6Y0X6</accession>
<accession>Q80UR5</accession>
<evidence type="ECO:0000250" key="1"/>
<evidence type="ECO:0000255" key="2"/>
<evidence type="ECO:0000255" key="3">
    <source>
        <dbReference type="PROSITE-ProRule" id="PRU00039"/>
    </source>
</evidence>
<evidence type="ECO:0000255" key="4">
    <source>
        <dbReference type="PROSITE-ProRule" id="PRU00220"/>
    </source>
</evidence>
<evidence type="ECO:0000255" key="5">
    <source>
        <dbReference type="PROSITE-ProRule" id="PRU00580"/>
    </source>
</evidence>
<evidence type="ECO:0000256" key="6">
    <source>
        <dbReference type="SAM" id="MobiDB-lite"/>
    </source>
</evidence>
<evidence type="ECO:0000269" key="7">
    <source>
    </source>
</evidence>
<evidence type="ECO:0000269" key="8">
    <source>
    </source>
</evidence>
<evidence type="ECO:0000269" key="9">
    <source>
    </source>
</evidence>
<evidence type="ECO:0000305" key="10"/>
<dbReference type="EMBL" id="AY570293">
    <property type="protein sequence ID" value="AAS77382.2"/>
    <property type="molecule type" value="mRNA"/>
</dbReference>
<dbReference type="EMBL" id="EU089955">
    <property type="protein sequence ID" value="ABU50842.1"/>
    <property type="molecule type" value="mRNA"/>
</dbReference>
<dbReference type="EMBL" id="EU089956">
    <property type="protein sequence ID" value="ABU50843.1"/>
    <property type="molecule type" value="mRNA"/>
</dbReference>
<dbReference type="EMBL" id="EU089957">
    <property type="protein sequence ID" value="ABU50844.1"/>
    <property type="molecule type" value="mRNA"/>
</dbReference>
<dbReference type="EMBL" id="EU089959">
    <property type="protein sequence ID" value="ABU50846.1"/>
    <property type="molecule type" value="mRNA"/>
</dbReference>
<dbReference type="EMBL" id="AY172172">
    <property type="protein sequence ID" value="AAO38851.1"/>
    <property type="molecule type" value="mRNA"/>
</dbReference>
<dbReference type="EMBL" id="AY193891">
    <property type="protein sequence ID" value="AAO49800.1"/>
    <property type="status" value="ALT_SEQ"/>
    <property type="molecule type" value="mRNA"/>
</dbReference>
<dbReference type="EMBL" id="BC061502">
    <property type="protein sequence ID" value="AAH61502.1"/>
    <property type="molecule type" value="mRNA"/>
</dbReference>
<dbReference type="RefSeq" id="NP_997126.2">
    <molecule id="Q6PZE0-1"/>
    <property type="nucleotide sequence ID" value="NM_207243.2"/>
</dbReference>
<dbReference type="SMR" id="Q6PZE0"/>
<dbReference type="BioGRID" id="232106">
    <property type="interactions" value="3"/>
</dbReference>
<dbReference type="FunCoup" id="Q6PZE0">
    <property type="interactions" value="2"/>
</dbReference>
<dbReference type="STRING" id="10090.ENSMUSP00000158627"/>
<dbReference type="GlyGen" id="Q6PZE0">
    <property type="glycosylation" value="37 sites"/>
</dbReference>
<dbReference type="PhosphoSitePlus" id="Q6PZE0"/>
<dbReference type="PaxDb" id="10090-ENSMUSP00000085907"/>
<dbReference type="ProteomicsDB" id="290071">
    <molecule id="Q6PZE0-1"/>
</dbReference>
<dbReference type="Antibodypedia" id="66808">
    <property type="antibodies" value="6 antibodies from 5 providers"/>
</dbReference>
<dbReference type="Ensembl" id="ENSMUST00000239545.1">
    <molecule id="Q6PZE0-1"/>
    <property type="protein sequence ID" value="ENSMUSP00000159433.2"/>
    <property type="gene ID" value="ENSMUSG00000118670.1"/>
</dbReference>
<dbReference type="GeneID" id="239611"/>
<dbReference type="KEGG" id="mmu:239611"/>
<dbReference type="UCSC" id="uc007xie.1">
    <molecule id="Q6PZE0-1"/>
    <property type="organism name" value="mouse"/>
</dbReference>
<dbReference type="AGR" id="MGI:2676278"/>
<dbReference type="CTD" id="283463"/>
<dbReference type="MGI" id="MGI:2676278">
    <property type="gene designation" value="Muc19"/>
</dbReference>
<dbReference type="eggNOG" id="KOG1216">
    <property type="taxonomic scope" value="Eukaryota"/>
</dbReference>
<dbReference type="GeneTree" id="ENSGT00940000164528"/>
<dbReference type="InParanoid" id="Q6PZE0"/>
<dbReference type="OMA" id="GNWSIDL"/>
<dbReference type="OrthoDB" id="74376at9989"/>
<dbReference type="Reactome" id="R-MMU-913709">
    <property type="pathway name" value="O-linked glycosylation of mucins"/>
</dbReference>
<dbReference type="Reactome" id="R-MMU-977068">
    <property type="pathway name" value="Termination of O-glycan biosynthesis"/>
</dbReference>
<dbReference type="BioGRID-ORCS" id="239611">
    <property type="hits" value="1 hit in 23 CRISPR screens"/>
</dbReference>
<dbReference type="ChiTaRS" id="Muc19">
    <property type="organism name" value="mouse"/>
</dbReference>
<dbReference type="Proteomes" id="UP000000589">
    <property type="component" value="Chromosome 15"/>
</dbReference>
<dbReference type="RNAct" id="Q6PZE0">
    <property type="molecule type" value="protein"/>
</dbReference>
<dbReference type="GO" id="GO:0005576">
    <property type="term" value="C:extracellular region"/>
    <property type="evidence" value="ECO:0007669"/>
    <property type="project" value="UniProtKB-SubCell"/>
</dbReference>
<dbReference type="GO" id="GO:0046848">
    <property type="term" value="F:hydroxyapatite binding"/>
    <property type="evidence" value="ECO:0000314"/>
    <property type="project" value="MGI"/>
</dbReference>
<dbReference type="GO" id="GO:0140367">
    <property type="term" value="P:antibacterial innate immune response"/>
    <property type="evidence" value="ECO:0000315"/>
    <property type="project" value="MGI"/>
</dbReference>
<dbReference type="GO" id="GO:0030183">
    <property type="term" value="P:B cell differentiation"/>
    <property type="evidence" value="ECO:0000315"/>
    <property type="project" value="MGI"/>
</dbReference>
<dbReference type="GO" id="GO:0042100">
    <property type="term" value="P:B cell proliferation"/>
    <property type="evidence" value="ECO:0000315"/>
    <property type="project" value="MGI"/>
</dbReference>
<dbReference type="GO" id="GO:0060689">
    <property type="term" value="P:cell differentiation involved in salivary gland development"/>
    <property type="evidence" value="ECO:0000315"/>
    <property type="project" value="MGI"/>
</dbReference>
<dbReference type="GO" id="GO:0070098">
    <property type="term" value="P:chemokine-mediated signaling pathway"/>
    <property type="evidence" value="ECO:0000315"/>
    <property type="project" value="MGI"/>
</dbReference>
<dbReference type="GO" id="GO:0048565">
    <property type="term" value="P:digestive tract development"/>
    <property type="evidence" value="ECO:0000315"/>
    <property type="project" value="MGI"/>
</dbReference>
<dbReference type="GO" id="GO:0002316">
    <property type="term" value="P:follicular B cell differentiation"/>
    <property type="evidence" value="ECO:0000315"/>
    <property type="project" value="MGI"/>
</dbReference>
<dbReference type="GO" id="GO:0010467">
    <property type="term" value="P:gene expression"/>
    <property type="evidence" value="ECO:0000315"/>
    <property type="project" value="MGI"/>
</dbReference>
<dbReference type="GO" id="GO:0002244">
    <property type="term" value="P:hematopoietic progenitor cell differentiation"/>
    <property type="evidence" value="ECO:0000316"/>
    <property type="project" value="MGI"/>
</dbReference>
<dbReference type="GO" id="GO:0048872">
    <property type="term" value="P:homeostasis of number of cells"/>
    <property type="evidence" value="ECO:0000315"/>
    <property type="project" value="MGI"/>
</dbReference>
<dbReference type="GO" id="GO:0006955">
    <property type="term" value="P:immune response"/>
    <property type="evidence" value="ECO:0000315"/>
    <property type="project" value="MGI"/>
</dbReference>
<dbReference type="GO" id="GO:0006954">
    <property type="term" value="P:inflammatory response"/>
    <property type="evidence" value="ECO:0000315"/>
    <property type="project" value="MGI"/>
</dbReference>
<dbReference type="GO" id="GO:0045087">
    <property type="term" value="P:innate immune response"/>
    <property type="evidence" value="ECO:0000315"/>
    <property type="project" value="MGI"/>
</dbReference>
<dbReference type="GO" id="GO:0032808">
    <property type="term" value="P:lacrimal gland development"/>
    <property type="evidence" value="ECO:0000315"/>
    <property type="project" value="MGI"/>
</dbReference>
<dbReference type="GO" id="GO:0030324">
    <property type="term" value="P:lung development"/>
    <property type="evidence" value="ECO:0000315"/>
    <property type="project" value="MGI"/>
</dbReference>
<dbReference type="GO" id="GO:0050728">
    <property type="term" value="P:negative regulation of inflammatory response"/>
    <property type="evidence" value="ECO:0000315"/>
    <property type="project" value="MGI"/>
</dbReference>
<dbReference type="GO" id="GO:0042476">
    <property type="term" value="P:odontogenesis"/>
    <property type="evidence" value="ECO:0000315"/>
    <property type="project" value="MGI"/>
</dbReference>
<dbReference type="GO" id="GO:0140459">
    <property type="term" value="P:response to Gram-positive bacterium"/>
    <property type="evidence" value="ECO:0000315"/>
    <property type="project" value="MGI"/>
</dbReference>
<dbReference type="GO" id="GO:0009615">
    <property type="term" value="P:response to virus"/>
    <property type="evidence" value="ECO:0000314"/>
    <property type="project" value="MGI"/>
</dbReference>
<dbReference type="GO" id="GO:0007431">
    <property type="term" value="P:salivary gland development"/>
    <property type="evidence" value="ECO:0000315"/>
    <property type="project" value="MGI"/>
</dbReference>
<dbReference type="GO" id="GO:0030217">
    <property type="term" value="P:T cell differentiation"/>
    <property type="evidence" value="ECO:0000315"/>
    <property type="project" value="MGI"/>
</dbReference>
<dbReference type="GO" id="GO:0042098">
    <property type="term" value="P:T cell proliferation"/>
    <property type="evidence" value="ECO:0000315"/>
    <property type="project" value="MGI"/>
</dbReference>
<dbReference type="GO" id="GO:0042092">
    <property type="term" value="P:type 2 immune response"/>
    <property type="evidence" value="ECO:0000315"/>
    <property type="project" value="MGI"/>
</dbReference>
<dbReference type="CDD" id="cd19941">
    <property type="entry name" value="TIL"/>
    <property type="match status" value="3"/>
</dbReference>
<dbReference type="FunFam" id="2.10.25.10:FF:000153">
    <property type="entry name" value="MUC5B isoform 1"/>
    <property type="match status" value="1"/>
</dbReference>
<dbReference type="Gene3D" id="2.10.25.10">
    <property type="entry name" value="Laminin"/>
    <property type="match status" value="3"/>
</dbReference>
<dbReference type="InterPro" id="IPR006207">
    <property type="entry name" value="Cys_knot_C"/>
</dbReference>
<dbReference type="InterPro" id="IPR036084">
    <property type="entry name" value="Ser_inhib-like_sf"/>
</dbReference>
<dbReference type="InterPro" id="IPR002919">
    <property type="entry name" value="TIL_dom"/>
</dbReference>
<dbReference type="InterPro" id="IPR014853">
    <property type="entry name" value="VWF/SSPO/ZAN-like_Cys-rich_dom"/>
</dbReference>
<dbReference type="InterPro" id="IPR001007">
    <property type="entry name" value="VWF_dom"/>
</dbReference>
<dbReference type="InterPro" id="IPR001846">
    <property type="entry name" value="VWF_type-D"/>
</dbReference>
<dbReference type="PANTHER" id="PTHR47246">
    <property type="entry name" value="MUCIN-19"/>
    <property type="match status" value="1"/>
</dbReference>
<dbReference type="PANTHER" id="PTHR47246:SF1">
    <property type="entry name" value="MUCIN-19"/>
    <property type="match status" value="1"/>
</dbReference>
<dbReference type="Pfam" id="PF08742">
    <property type="entry name" value="C8"/>
    <property type="match status" value="3"/>
</dbReference>
<dbReference type="Pfam" id="PF01826">
    <property type="entry name" value="TIL"/>
    <property type="match status" value="1"/>
</dbReference>
<dbReference type="Pfam" id="PF00094">
    <property type="entry name" value="VWD"/>
    <property type="match status" value="3"/>
</dbReference>
<dbReference type="SMART" id="SM00832">
    <property type="entry name" value="C8"/>
    <property type="match status" value="2"/>
</dbReference>
<dbReference type="SMART" id="SM00041">
    <property type="entry name" value="CT"/>
    <property type="match status" value="1"/>
</dbReference>
<dbReference type="SMART" id="SM00214">
    <property type="entry name" value="VWC"/>
    <property type="match status" value="2"/>
</dbReference>
<dbReference type="SMART" id="SM00215">
    <property type="entry name" value="VWC_out"/>
    <property type="match status" value="2"/>
</dbReference>
<dbReference type="SMART" id="SM00216">
    <property type="entry name" value="VWD"/>
    <property type="match status" value="3"/>
</dbReference>
<dbReference type="SUPFAM" id="SSF57567">
    <property type="entry name" value="Serine protease inhibitors"/>
    <property type="match status" value="3"/>
</dbReference>
<dbReference type="PROSITE" id="PS01185">
    <property type="entry name" value="CTCK_1"/>
    <property type="match status" value="1"/>
</dbReference>
<dbReference type="PROSITE" id="PS01225">
    <property type="entry name" value="CTCK_2"/>
    <property type="match status" value="1"/>
</dbReference>
<dbReference type="PROSITE" id="PS01208">
    <property type="entry name" value="VWFC_1"/>
    <property type="match status" value="1"/>
</dbReference>
<dbReference type="PROSITE" id="PS50184">
    <property type="entry name" value="VWFC_2"/>
    <property type="match status" value="1"/>
</dbReference>
<dbReference type="PROSITE" id="PS51233">
    <property type="entry name" value="VWFD"/>
    <property type="match status" value="3"/>
</dbReference>
<keyword id="KW-0025">Alternative splicing</keyword>
<keyword id="KW-1015">Disulfide bond</keyword>
<keyword id="KW-1185">Reference proteome</keyword>
<keyword id="KW-0677">Repeat</keyword>
<keyword id="KW-0964">Secreted</keyword>
<keyword id="KW-0732">Signal</keyword>
<gene>
    <name type="primary">Muc19</name>
</gene>
<organism>
    <name type="scientific">Mus musculus</name>
    <name type="common">Mouse</name>
    <dbReference type="NCBI Taxonomy" id="10090"/>
    <lineage>
        <taxon>Eukaryota</taxon>
        <taxon>Metazoa</taxon>
        <taxon>Chordata</taxon>
        <taxon>Craniata</taxon>
        <taxon>Vertebrata</taxon>
        <taxon>Euteleostomi</taxon>
        <taxon>Mammalia</taxon>
        <taxon>Eutheria</taxon>
        <taxon>Euarchontoglires</taxon>
        <taxon>Glires</taxon>
        <taxon>Rodentia</taxon>
        <taxon>Myomorpha</taxon>
        <taxon>Muroidea</taxon>
        <taxon>Muridae</taxon>
        <taxon>Murinae</taxon>
        <taxon>Mus</taxon>
        <taxon>Mus</taxon>
    </lineage>
</organism>
<feature type="signal peptide" evidence="2">
    <location>
        <begin position="1"/>
        <end position="20"/>
    </location>
</feature>
<feature type="chain" id="PRO_5000093121" description="Mucin-19">
    <location>
        <begin position="21"/>
        <end position="7524"/>
    </location>
</feature>
<feature type="domain" description="VWFD 1" evidence="5">
    <location>
        <begin position="55"/>
        <end position="225"/>
    </location>
</feature>
<feature type="domain" description="TIL">
    <location>
        <begin position="298"/>
        <end position="353"/>
    </location>
</feature>
<feature type="domain" description="VWFD 2" evidence="5">
    <location>
        <begin position="392"/>
        <end position="568"/>
    </location>
</feature>
<feature type="domain" description="VWFD 3" evidence="5">
    <location>
        <begin position="851"/>
        <end position="1025"/>
    </location>
</feature>
<feature type="repeat" description="1">
    <location>
        <begin position="1321"/>
        <end position="1483"/>
    </location>
</feature>
<feature type="repeat" description="2">
    <location>
        <begin position="1484"/>
        <end position="1646"/>
    </location>
</feature>
<feature type="repeat" description="3">
    <location>
        <begin position="1647"/>
        <end position="1809"/>
    </location>
</feature>
<feature type="repeat" description="4">
    <location>
        <begin position="1810"/>
        <end position="1972"/>
    </location>
</feature>
<feature type="repeat" description="5">
    <location>
        <begin position="1973"/>
        <end position="2135"/>
    </location>
</feature>
<feature type="repeat" description="6">
    <location>
        <begin position="2136"/>
        <end position="2298"/>
    </location>
</feature>
<feature type="repeat" description="7">
    <location>
        <begin position="2299"/>
        <end position="2461"/>
    </location>
</feature>
<feature type="repeat" description="8">
    <location>
        <begin position="2462"/>
        <end position="2624"/>
    </location>
</feature>
<feature type="repeat" description="9">
    <location>
        <begin position="2625"/>
        <end position="2787"/>
    </location>
</feature>
<feature type="repeat" description="10">
    <location>
        <begin position="2788"/>
        <end position="2950"/>
    </location>
</feature>
<feature type="repeat" description="11">
    <location>
        <begin position="2951"/>
        <end position="3113"/>
    </location>
</feature>
<feature type="repeat" description="12">
    <location>
        <begin position="3114"/>
        <end position="3276"/>
    </location>
</feature>
<feature type="repeat" description="13">
    <location>
        <begin position="3277"/>
        <end position="3439"/>
    </location>
</feature>
<feature type="repeat" description="14">
    <location>
        <begin position="3440"/>
        <end position="3602"/>
    </location>
</feature>
<feature type="repeat" description="15">
    <location>
        <begin position="3603"/>
        <end position="3765"/>
    </location>
</feature>
<feature type="repeat" description="16">
    <location>
        <begin position="3766"/>
        <end position="3928"/>
    </location>
</feature>
<feature type="repeat" description="17">
    <location>
        <begin position="3929"/>
        <end position="4091"/>
    </location>
</feature>
<feature type="repeat" description="18">
    <location>
        <begin position="4092"/>
        <end position="4254"/>
    </location>
</feature>
<feature type="repeat" description="19">
    <location>
        <begin position="4255"/>
        <end position="4417"/>
    </location>
</feature>
<feature type="repeat" description="20">
    <location>
        <begin position="4418"/>
        <end position="4580"/>
    </location>
</feature>
<feature type="repeat" description="21">
    <location>
        <begin position="4581"/>
        <end position="4743"/>
    </location>
</feature>
<feature type="repeat" description="22">
    <location>
        <begin position="4744"/>
        <end position="4906"/>
    </location>
</feature>
<feature type="repeat" description="23">
    <location>
        <begin position="4907"/>
        <end position="5069"/>
    </location>
</feature>
<feature type="repeat" description="24">
    <location>
        <begin position="5070"/>
        <end position="5232"/>
    </location>
</feature>
<feature type="repeat" description="25">
    <location>
        <begin position="5233"/>
        <end position="5395"/>
    </location>
</feature>
<feature type="repeat" description="26">
    <location>
        <begin position="5396"/>
        <end position="5558"/>
    </location>
</feature>
<feature type="repeat" description="27">
    <location>
        <begin position="5559"/>
        <end position="5721"/>
    </location>
</feature>
<feature type="repeat" description="28">
    <location>
        <begin position="5722"/>
        <end position="5884"/>
    </location>
</feature>
<feature type="repeat" description="29">
    <location>
        <begin position="5885"/>
        <end position="6047"/>
    </location>
</feature>
<feature type="repeat" description="30">
    <location>
        <begin position="6048"/>
        <end position="6210"/>
    </location>
</feature>
<feature type="repeat" description="31">
    <location>
        <begin position="6211"/>
        <end position="6373"/>
    </location>
</feature>
<feature type="repeat" description="32">
    <location>
        <begin position="6374"/>
        <end position="6536"/>
    </location>
</feature>
<feature type="repeat" description="33">
    <location>
        <begin position="6537"/>
        <end position="6699"/>
    </location>
</feature>
<feature type="repeat" description="34">
    <location>
        <begin position="6700"/>
        <end position="6862"/>
    </location>
</feature>
<feature type="repeat" description="35">
    <location>
        <begin position="6863"/>
        <end position="7025"/>
    </location>
</feature>
<feature type="repeat" description="36">
    <location>
        <begin position="7026"/>
        <end position="7188"/>
    </location>
</feature>
<feature type="domain" description="VWFC 1" evidence="4">
    <location>
        <begin position="7302"/>
        <end position="7368"/>
    </location>
</feature>
<feature type="domain" description="VWFC 2" evidence="4">
    <location>
        <begin position="7370"/>
        <end position="7432"/>
    </location>
</feature>
<feature type="domain" description="CTCK" evidence="3">
    <location>
        <begin position="7435"/>
        <end position="7519"/>
    </location>
</feature>
<feature type="region of interest" description="Disordered" evidence="6">
    <location>
        <begin position="20"/>
        <end position="47"/>
    </location>
</feature>
<feature type="region of interest" description="Disordered" evidence="6">
    <location>
        <begin position="1244"/>
        <end position="7217"/>
    </location>
</feature>
<feature type="region of interest" description="Approximate repeats">
    <location>
        <begin position="1321"/>
        <end position="7188"/>
    </location>
</feature>
<feature type="region of interest" description="Disordered" evidence="6">
    <location>
        <begin position="7249"/>
        <end position="7297"/>
    </location>
</feature>
<feature type="compositionally biased region" description="Low complexity" evidence="6">
    <location>
        <begin position="21"/>
        <end position="34"/>
    </location>
</feature>
<feature type="compositionally biased region" description="Low complexity" evidence="6">
    <location>
        <begin position="1244"/>
        <end position="1261"/>
    </location>
</feature>
<feature type="compositionally biased region" description="Polar residues" evidence="6">
    <location>
        <begin position="1262"/>
        <end position="1289"/>
    </location>
</feature>
<feature type="compositionally biased region" description="Low complexity" evidence="6">
    <location>
        <begin position="1320"/>
        <end position="7099"/>
    </location>
</feature>
<feature type="compositionally biased region" description="Low complexity" evidence="6">
    <location>
        <begin position="7112"/>
        <end position="7217"/>
    </location>
</feature>
<feature type="compositionally biased region" description="Polar residues" evidence="6">
    <location>
        <begin position="7261"/>
        <end position="7291"/>
    </location>
</feature>
<feature type="disulfide bond" evidence="5">
    <location>
        <begin position="79"/>
        <end position="224"/>
    </location>
</feature>
<feature type="disulfide bond" evidence="5">
    <location>
        <begin position="394"/>
        <end position="529"/>
    </location>
</feature>
<feature type="disulfide bond" evidence="5">
    <location>
        <begin position="434"/>
        <end position="442"/>
    </location>
</feature>
<feature type="disulfide bond" evidence="5">
    <location>
        <begin position="853"/>
        <end position="989"/>
    </location>
</feature>
<feature type="disulfide bond" evidence="5">
    <location>
        <begin position="875"/>
        <end position="1024"/>
    </location>
</feature>
<feature type="disulfide bond" evidence="5">
    <location>
        <begin position="884"/>
        <end position="986"/>
    </location>
</feature>
<feature type="disulfide bond" evidence="5">
    <location>
        <begin position="900"/>
        <end position="907"/>
    </location>
</feature>
<feature type="disulfide bond" evidence="1">
    <location>
        <begin position="7435"/>
        <end position="7482"/>
    </location>
</feature>
<feature type="disulfide bond" evidence="1">
    <location>
        <begin position="7449"/>
        <end position="7496"/>
    </location>
</feature>
<feature type="disulfide bond" evidence="1">
    <location>
        <begin position="7458"/>
        <end position="7512"/>
    </location>
</feature>
<feature type="disulfide bond" evidence="1">
    <location>
        <begin position="7462"/>
        <end position="7514"/>
    </location>
</feature>
<feature type="disulfide bond" evidence="1">
    <location>
        <begin status="unknown"/>
        <end position="7518"/>
    </location>
</feature>
<feature type="sequence conflict" description="In Ref. 3; AAO49800." evidence="10" ref="3">
    <original>V</original>
    <variation>A</variation>
    <location>
        <position position="7111"/>
    </location>
</feature>
<feature type="sequence conflict" description="In Ref. 2; AAO38851 and 3; AAO49800." evidence="10" ref="2 3">
    <original>P</original>
    <variation>L</variation>
    <location>
        <position position="7178"/>
    </location>
</feature>
<feature type="sequence conflict" description="In Ref. 2; AAO38851, 3; AAO49800 and 4; AAH61502." evidence="10" ref="2 3 4">
    <original>E</original>
    <variation>V</variation>
    <location>
        <position position="7293"/>
    </location>
</feature>
<feature type="sequence conflict" description="In Ref. 2; AAO38851 and 4; AAH61502." evidence="10" ref="2 4">
    <original>V</original>
    <variation>L</variation>
    <location>
        <position position="7333"/>
    </location>
</feature>
<reference key="1">
    <citation type="journal article" date="2004" name="Physiol. Genomics">
        <title>The gene encoding mouse Muc19: cDNA, genomic organization and relationship to Smgc.</title>
        <authorList>
            <person name="Culp D.J."/>
            <person name="Latchney L.R."/>
            <person name="Fallon M.A."/>
            <person name="Denny P.A."/>
            <person name="Denny P.C."/>
            <person name="Couwenhoven R.I."/>
            <person name="Chuang S."/>
        </authorList>
    </citation>
    <scope>NUCLEOTIDE SEQUENCE [MRNA]</scope>
    <scope>TISSUE SPECIFICITY</scope>
    <source>
        <strain>NFS</strain>
        <tissue>Sublingual gland</tissue>
    </source>
</reference>
<reference key="2">
    <citation type="journal article" date="2003" name="Physiol. Genomics">
        <title>The sld mutation is specific for sublingual salivary mucous cells and disrupts apomucin gene expression.</title>
        <authorList>
            <person name="Fallon M.A."/>
            <person name="Latchney L.R."/>
            <person name="Hand A.R."/>
            <person name="Johar A."/>
            <person name="Denny P.A."/>
            <person name="Georgel P.T."/>
            <person name="Denny P.C."/>
            <person name="Culp D.J."/>
        </authorList>
    </citation>
    <scope>NUCLEOTIDE SEQUENCE [MRNA] OF 6711-7524</scope>
    <scope>TISSUE SPECIFICITY</scope>
    <source>
        <strain>Swiss Webster</strain>
        <tissue>Sublingual gland</tissue>
    </source>
</reference>
<reference key="3">
    <citation type="journal article" date="2004" name="Am. J. Respir. Cell Mol. Biol.">
        <title>Genome-wide search and identification of a novel gel-forming mucin MUC19/Muc19 in glandular tissues.</title>
        <authorList>
            <person name="Chen Y."/>
            <person name="Zhao Y.H."/>
            <person name="Kalaslavadi T.B."/>
            <person name="Hamati E."/>
            <person name="Nehrke K."/>
            <person name="Le A.D."/>
            <person name="Ann D.K."/>
            <person name="Wu R."/>
        </authorList>
    </citation>
    <scope>NUCLEOTIDE SEQUENCE [MRNA] OF 6918-7524</scope>
    <scope>TISSUE SPECIFICITY</scope>
    <source>
        <strain>C57BL/6 X DBA/2</strain>
    </source>
</reference>
<reference key="4">
    <citation type="journal article" date="2004" name="Genome Res.">
        <title>The status, quality, and expansion of the NIH full-length cDNA project: the Mammalian Gene Collection (MGC).</title>
        <authorList>
            <consortium name="The MGC Project Team"/>
        </authorList>
    </citation>
    <scope>NUCLEOTIDE SEQUENCE [LARGE SCALE MRNA] OF 7276-7524</scope>
    <source>
        <strain>FVB/N</strain>
        <tissue>Salivary gland</tissue>
    </source>
</reference>
<proteinExistence type="evidence at transcript level"/>
<protein>
    <recommendedName>
        <fullName>Mucin-19</fullName>
        <shortName>MUC-19</shortName>
    </recommendedName>
    <alternativeName>
        <fullName>Gel-forming secreted mucin-19</fullName>
    </alternativeName>
    <alternativeName>
        <fullName>Sublingual apomucin</fullName>
    </alternativeName>
</protein>
<sequence length="7524" mass="693499">MKLILLYLAVVLCFVGKGAARSPTTTRTPTPSTSEKASHVPEATPTYSEANEVAGEATMWGKDKYKALNGHIFSFESECTFTFCRDCAEPGGDFNIEIKKHKNGDIEEIKALIDDVEILVVRNSISVNEERVKVPFSNKMIHIKKQGNHYSLKTRRRILSLKWSKDKLSLILYSHYTTCGLCGNFDSVPGDDVNEHIASSKISNDCPSPLSRSNEVCEDGVQYCDKIIETYFEKCSKVSPLSREYKNVCADEYCRKGGGKQTTCDTYSELARLCAYDGPGDYEHWRDDSAVVCAKEQCPGKHIYKECGPSNPPTCSNVAPFQDSECVSGCTCPEGYLLDDIGEKGKCVLKEKCPCESNGKVYKPGKVREGPCGSRCTCQEAKWSCTEARCPGICKVEGSSFTTFDDNKFSHPGDCHFLAVHNDEISISVEIHPCGNGQTGSCLTSVMVLQNSSSSSNRYVFNRDGTVTKDGVIIKGYYYSDDVQIFNSSSSYMQAEILSHIKLQIQLAPRMQLYVSLAPNTSTDTVGLCGSFNNKAEDDFMSSQNILESTAQAFANSWEMMPCSEGSPSSCVSIETEKFAESNCEILLSSSGPFAACHQTVNPKFYHEECKKYTCSCENGQDCLCTVLGNYVKACAEKEIYLVGWRDGLCEVSCPSGLVFNYKVKTCNSSCRSLSARDRSCDIEDIPVDGCTCPDGMYQNNEGNCVQKSECDCYVNDEIVQPGKSILIDDNKCVCQDGVLHCQTPLDLTLQNCSRGAEYIDCKDPKAQRRTERTCATRNIPDFEGDLPCKRGCYCPVGMVRNSKGICIHPDDCPCSFGDREYEQGSVTSVGCNECTCIKGSWNCTQNECQSTCHVYGEGHFRTFDGESYSFDGLCQYTFLEDYCGQENGTFRILIESVPCCENGLTCSRKVIVTFQDQNIILQDGKVTAVQTAESTDCRERSANLYSIHTVGLYLIVKLLNGIILIWDKYTKVSVILDPSWQNKVCGLCGNNNGDLKDDFTTRHSSVAAGALEFANSWKTSQECSDTVTQSFPCDSNPYCKAWAEKRCEILRDDTFRDCHSKVDPTTYYDACIEEACSCDMEGKYLGFCTAVAMYAEACNAAGVCVSWRKPNLCPVYCDYYNAPGECSWHYEPCGTVTAKTCKDQVIGQKFSSLLEGCYAKCPENAPYLDENTMKCVQLSECSCFYNDVIPAGGAVVDDCGRTCSCSAGELECSETPPNSTTTTTATTAAVSTATTTSVLSTSAAATRASSSTSGSVETSVPATTSTSKAQAHITTASSTETSALNSTAVYPKATTREGLLSSSGPGAFVAERPDNTPRPAVSTTSAGSTSARAATTSPGGSSGSSAPASSTSGRAATTTSTSAATTTTTTTATTVGSAGSSAPTASSTAAGSGLREAANATSAPASTSGQPGASTGSSGTSSSVSSTAAATTAGTTTAASNETSAPASTAGPTSSATTAAPASSSASSATTPAETAGSTTGPAVSTTSAGSTSARAATTSPGGSSGSSAPASSTSGRAATTTSTATTTTTTTTTATTVGSAGSSAPTASSTAAGSGLREAANATSAPASTSGQPGASTGSSGTSSSVSSTAAATTAGTTTAASNETSAPASTAGPTSSATTAAPASSSASSATTPAETAGSTTGPAVSTTSAGSTSARAATTSPGGSSGSSAPASSTSGRAATTTSTATTTTTTTTTATTVGSAGSSAPTASSTAAGSGLREAANATSAPASTSGQPGASTGSSGTSSSVSSTAAATTAGTTTAASNETSAPASTAGPTSSATTAAPASSSASSATTPAETAGSTTGPAVSTTSAGSTSARAATTSPGGSSGSSAPASSTSGRAATTTSTATTTTTTTTTATTVGSAGSSAPTASSTAAGSGLREAANATSAPASTSGQPGASTGSSGTSSSVSSTAAATTAGTTTAASNETSAPASTAGPTSSATTAAPASSSASSATTPAETAGSTTGPAVSTTSAGSTSARAATTSPGGSSGSSAPASSTSGRAATTTSTATTTTTTTTTATTVGSAGSSAPTASSTAAGSGLREAANATSAPASTSGQPGASTGSSGTSSSVSSTAAATTAGTTTAASNETSAPASTAGPTSSATTAAPASSSASSATTPAETAGSTTGPAVSTTSAGSTSARAATTSPGGSSGSSAPASSTSGRAATTTSTATTTTTTTTTATTVGSAGSSAPTASSTAAGSGLREAANATSAPASTSGQPGASTGSSGTSSSVSSTAAATTAGTTTAASNETSAPASTAGPTSSATTAAPASSSASSATTPAETAGSTTGPAVSTTSAGSTSARAATTSPGGSSGSSAPASSTSGRAATTTSTATTTTTTTTTATTVGSAGSSAPTASSTAAGSGLREAANATSAPASTSGQPGASTGSSGTSSSVSSTAAATTAGTTTAASNETSAPASTAGPTSSATTAAPASSSASSATTPAETAGSTTGPAVSTTSAGSTSARAATTSPGGSSGSSAPASSTSGRAATTTSTATTTTTTTTTATTVGSAGSSAPTASSTAAGSGLREAANATSAPASTSGQPGASTGSSGTSSSVSSTAAATTAGTTTAASNETSAPASTAGPTSSATTAAPASSSASSATTPAETAGSTTGPAVSTTSAGSTSARAATTSPGGSSGSSAPASSTSGRAATTTSTATTTTTTTTTATTVGSAGSSAPTASSTAAGSGLREAANATSAPASTSGQPGASTGSSGTSSSVSSTAAATTAGTTTAASNETSAPASTAGPTSSATTAAPASSSASSATTPAETAGSTTGPAVSTTSAGSTSARAATTSPGGSSGSSAPASSTSGRAATTTSTATTTTTTTTTATTVGSAGSSAPTASSTAAGSGLREAANATSAPASTSGQPGASTGSSGTSSSVSSTAAATTAGTTTAASNETSAPASTAGPTSSATTAAPASSSASSATTPAETAGSTTGPAVSTTSAGSTSARAATTSPGGSSGSSAPASSTSGRAATTTSTATTTTTTTTTATTVGSAGSSAPTASSTAAGSGLREAANATSAPASTSGQPGASTGSSGTSSSVSSTAAATTAGTTTAASNETSAPASTAGPTSSATTAAPASSSASSATTPAETAGSTTGPAVSTTSAGSTSARAATTSPGGSSGSSAPASSTSGRAATTTSTATTTTTTTTTATTVGSAGSSAPTASSTAAGSGLREAANATSAPASTSGQPGASTGSSGTSSSVSSTAAATTAGTTTAASNETSAPASTAGPTSSATTAAPASSSASSATTPAETAGSTTGPAVSTTSAGSTSARAATTSPGGSSGSSAPASSTSGRAATTTSTATTTTTTTTTATTVGSAGSSAPTASSTAAGSGLREAANATSAPASTSGQPGASTGSSGTSSSVSSTAAATTAGTTTAASNETSAPASTAGPTSSATTAAPASSSASSATTPAETAGSTTGPAVSTTSAGSTSARAATTSPGGSSGSSAPASSTSGRAATTTSTATTTTTTTTTATTVGSAGSSAPTASSTAAGSGLREAANATSAPASTSGQPGASTGSSGTSSSVSSTAAATTAGTTTAASNETSAPASTAGPTSSATTAAPASSSASSATTPAETAGSTTGPAVSTTSAGSTSARAATTSPGGSSGSSAPASSTSGRAATTTSTATTTTTTTTTATTVGSAGSSAPTASSTAAGSGLREAANATSAPASTSGQPGASTGSSGTSSSVSSTAAATTAGTTTAASNETSAPASTAGPTSSATTAAPASSSASSATTPAETAGSTTGPAVSTTSAGSTSARAATTSPGGSSGSSAPASSTSGRAATTTSTATTTTTTTTTATTVGSAGSSAPTASSTAAGSGLREAANATSAPASTSGQPGASTGSSGTSSSVSSTAAATTAGTTTAASNETSAPASTAGPTSSATTAAPASSSASSATTPAETAGSTTGPAVSTTSAGSTSARAATTSPGGSSGSSAPASSTSGRAATTTSTATTTTTTTTTATTVGSAGSSAPTASSTAAGSGLREAANATSAPASTSGQPGASTGSSGTSSSVSSTAAATTAGTTTAASNETSAPASTAGPTSSATTAAPASSSASSATTPAETAGSTTGPAVSTTSAGSTSARAATTSPGGSSGSSAPASSTSGRAATTTSTATTTTTTTTTATTVGSAGSSAPTASSTAAGSGLREAANATSAPASTSGQPGASTGSSGTSSSVSSTAAATTAGTTTAASNETSAPASTAGPTSSATTAAPASSSASSATTPAETAGSTTGPAVSTTSAGSTSARAATTSPGGSSGSSAPASSTSGRAATTTSTATTTTTTTTTATTVGSAGSSAPTASSTAAGSGLREAANATSAPASTSGQPGASTGSSGTSSSVSSTAAATTAGTTTAASNETSAPASTAGPTSSATTAAPASSSASSATTPAETAGSTTGPAVSTTSAGSTSARAATTSPGGSSGSSAPASSTSGRAATTTSTATTTTTTTTTATTVGSAGSSAPTASSTAAGSGLREAANATSAPASTSGQPGASTGSSGTSSSVSSTAAATTAGTTTAASNETSAPASTAGPTSSATTAAPASSSASSATTPAETAGSTTGPAVSTTSAGSTSARAATTSPGGSSGSSAPASSTSGRAATTTSTATTTTTTTTTATTVGSAGSSAPTASSTAAGSGLREAANATSAPASTSGQPGASTGSSGTSSSVSSTAAATTAGTTTAASNETSAPASTAGPTSSATTAAPASSSASSATTPAETAGSTTGPAVSTTSAGSTSARAATTSPGGSSGSSAPASSTSGRAATTTSTATTTTTTTTTATTVGSAGSSAPTASSTAAGSGLREAANATSAPASTSGQPGASTGSSGTSSSVSSTAAATTAGTTTAASNETSAPASTAGPTSSATTAAPASSSASSATTPAETAGSTTGPAVSTTSAGSTSARAATTSPGGSSGSSAPASSTSGRAATTTSTATTTTTTTTTATTVGSAGSSAPTASSTAAGSGLREAANATSAPASTSGQPGASTGSSGTSSSVSSTAAATTAGTTTAASNETSAPASTAGPTSSATTAAPASSSASSATTPAETAGSTTGPAVSTTSAGSTSARAATTSPGGSSGSSAPASSTSGRAATTTSTATTTTTTTTTATTVGSAGSSAPTASSTAAGSGLREAANATSAPASTSGQPGASTGSSGTSSSVSSTAAATTAGTTTAASNETSAPASTAGPTSSATTAAPASSSASSATTPAETAGSTTGPAVSTTSAGSTSARAATTSPGGSSGSSAPASSTSGRAATTTSTATTTTTTTTTATTVGSAGSSAPTASSTAAGSGLREAANATSAPASTSGQPGASTGSSGTSSSVSSTAAATTAGTTTAASNETSAPASTAGPTSSATTAAPASSSASSATTPAETAGSTTGPAVSTTSAGSTSARAATTSPGGSSGSSAPASSTSGRAATTTSTATTTTTTTTTATTVGSAGSSAPTASSTAAGSGLREAANATSAPASTSGQPGASTGSSGTSSSVSSTAAATTAGTTTAASNETSAPASTAGPTSSATTAAPASSSASSATTPAETAGSTTGPAVSTTSAGSTSARAATTSPGGSSGSSAPASSTSGRAATTTSTATTTTTTTTTATTVGSAGSSAPTASSTAAGSGLREAANATSAPASTSGQPGASTGSSGTSSSVSSTAAATTAGTTTAASNETSAPASTAGPTSSATTAAPASSSASSATTPAETAGSTTGPAVSTTSAGSTSARAATTSPGGSSGSSAPASSTSGRAATTTSTATTTTTTTTTATTVGSAGSSAPTASSTAAGSGLREAANATSAPASTSGQPGASTGSSGTSSSVSSTAAATTAGTTTAASNETSAPASTAGPTSSATTAAPASSSASSATTPAETAGSTTGPAVSTTSAGSTSARAATTSPGGSSGSSAPASSTSGRAATTTSTATTTTTTTTTATTVGSAGSSAPTASSTAAGSGLREAANATSAPASTSGQPGASTGSSGTSSSVSSTAAATTAGTTTAASNETSAPASTAGPTSSATTAAPASSSASSATTPAETAGSTTGPAVSTTSAGSTSARAATTSPGGSSGSSAPASSTSGRAATTTSTATTTTTTTTTATTVGSAGSSAPTASSTAAGSGLREAANATSAPASTSGQPGASTGSSGTSSSVSSTAAATTAGTTTAASNETSAPASTAGPTSSATTAAPASSSASSATTPAETAGSTTGPAVSTTSAGSTSARAATTSPGGSSGSSAPASSTSGRAATTTSTATTTTTTTTTATTVGSAGSSAPTASSTAAGSGLREAANATSAPASTSGQPGASTGSSGTSSSVSSTAAATTAGTTTAASNETSAPASTAGPTSSATTAAPASSSASSATTPAETAGSTTGPAVSTTSAGSTSARAATTSPGGSSGSSAPASSTSGRAATTTSTATTTTTTTTTATTVGSAGSSAPTASSTAAGSGLREAANATSAPASTSGQPGASTGSSGTSSSVSSTAAATTAGTTTAASNETSAPASTAGPTSSATTAAPASSSASSATTPAETAGSTTGPAVSTTSAGSTSARAATTSPGGSSGSSAPASSTSGRAATTTSTATTTTTTTTTATTVGSAGSSAPTASSTAAGSGLREAANATSAPASTSGQPGASTGSSGTSSSVSSTAAATTAGTTTAASNETSAPASTAGPTSSATTAAPASSSASSATTPAETAGSTTGPAVSTTSAGSTSARAATTSPGGSSGSSAPASSTSGRAATTTSTATTTTTTTTTATTVGSAGSSAPTASSTAAGSGLREAANATSAPASTSGQPGASTGSSGTSSSVSSTAAATTAGTTTAASNETSAPASTAGPTSSATTAAPASSSASSATTPAETAGSTTGPAVSTTSAGSTSARAATTSPGGSSGSSAPASSTSGRAATTTSTATTTTTTTTTATTVGSAGSSAPTASSTAAGSGLREAANATSAPASTSGQPGASTGSSGTSSSVSSTAAATTAGTTTAASNETSAPASTAGPTSSATTAAPASSSASSATTPAETAGSTTGPAVSTTSAGSTSARAATTSPGGSSGSSAPASSTSGRAATTTSTATTTTTTTTTATTVGSAGSSAPTASSTAAGSGLREAANATSAPVSTSGQPGASTGSSGTSSSVSSTAAATTAGTTTAASNETSAPASTAGPTSSATTAAPASSSASSATTPAETAGSTTGPAVSTTSAGSTSARAATTSPGGSSGSSSLAISTMSVSSSSFISPSGHPVPSTASVAFLSSPSVIKTGGTTGTTAKSNETTGRTTSMPASTSVAPGVTTSPNISQPECPDSLPPTPVCHGPLGEEKSPGDVWISNCHQCTCTEKQAVDCKPKECPSPPTCKDGEKLMKFKSNDSCCEIGHCEPRTCLFNNTDYAIGSSFDDPSNPCLSYTCNPTGLVAVVQDCPKQTWCAEEERIYDSNKCCYKCKNDCRTTPVNVTVKYNGCRKRVEMARCIGECKRSVKYNYETFQLENSCSCCREENYEFRDIALECSDGSTIPYRYRHTTTCSCRDQCEQSKAS</sequence>